<keyword id="KW-0067">ATP-binding</keyword>
<keyword id="KW-0315">Glutamine amidotransferase</keyword>
<keyword id="KW-0436">Ligase</keyword>
<keyword id="KW-0460">Magnesium</keyword>
<keyword id="KW-0479">Metal-binding</keyword>
<keyword id="KW-0547">Nucleotide-binding</keyword>
<keyword id="KW-0665">Pyrimidine biosynthesis</keyword>
<keyword id="KW-1185">Reference proteome</keyword>
<organism>
    <name type="scientific">Synechococcus sp. (strain CC9902)</name>
    <dbReference type="NCBI Taxonomy" id="316279"/>
    <lineage>
        <taxon>Bacteria</taxon>
        <taxon>Bacillati</taxon>
        <taxon>Cyanobacteriota</taxon>
        <taxon>Cyanophyceae</taxon>
        <taxon>Synechococcales</taxon>
        <taxon>Synechococcaceae</taxon>
        <taxon>Synechococcus</taxon>
    </lineage>
</organism>
<accession>Q3AUG4</accession>
<protein>
    <recommendedName>
        <fullName evidence="1">CTP synthase</fullName>
        <ecNumber evidence="1">6.3.4.2</ecNumber>
    </recommendedName>
    <alternativeName>
        <fullName evidence="1">Cytidine 5'-triphosphate synthase</fullName>
    </alternativeName>
    <alternativeName>
        <fullName evidence="1">Cytidine triphosphate synthetase</fullName>
        <shortName evidence="1">CTP synthetase</shortName>
        <shortName evidence="1">CTPS</shortName>
    </alternativeName>
    <alternativeName>
        <fullName evidence="1">UTP--ammonia ligase</fullName>
    </alternativeName>
</protein>
<sequence length="549" mass="60133">MAKFVFITGGVVSSIGKGIVAASLGRLLKSRGYNVSILKLDPYLNVDPGTMSPFQHGEVFVTEDGAETDLDLGHYERFTDTAMSRLNSVTTGSIYQSVINKERRGAYNGGTVQVIPHITGEIRERIHRVAANSGADVVITEIGGTVGDIESLPFLEAIREFRGDVGRQDLAYIHVTLLPFIGTSGELKTKPTQHSVKELRSIGIQPDVLVCRSDREISEDLKRKIGGFCGVPNRAVIPSLDADTIYAVPLTLEEGGLCREVLDVLQLTDHESDMTAWSQLVHNLRNPGPSVKVALVGKYVQLNDAYLSVVEALRHACIAQDASLDLHWVCAEQIETEGADALLRGMDAVVVPGGFGNRGVDGKIAAIRWAREQRVPFLGLCLGMQTAVIEWARNQAGLPEATSEELDPGTPHPVIHLLPEQQDVVDLGGTMRLGVYPCRIAPDTLADRLYGEQVVYERHRHRFEFNNAYRSLFLEAGYVVSGTSPDGRLVELIELKGHPFFTACQYHPEFLSRPGRPHPLFRGLIEAAQQRLPDSPAQAIRNQGEVTTP</sequence>
<reference key="1">
    <citation type="submission" date="2005-08" db="EMBL/GenBank/DDBJ databases">
        <title>Complete sequence of Synechococcus sp. CC9902.</title>
        <authorList>
            <person name="Copeland A."/>
            <person name="Lucas S."/>
            <person name="Lapidus A."/>
            <person name="Barry K."/>
            <person name="Detter J.C."/>
            <person name="Glavina T."/>
            <person name="Hammon N."/>
            <person name="Israni S."/>
            <person name="Pitluck S."/>
            <person name="Martinez M."/>
            <person name="Schmutz J."/>
            <person name="Larimer F."/>
            <person name="Land M."/>
            <person name="Kyrpides N."/>
            <person name="Ivanova N."/>
            <person name="Richardson P."/>
        </authorList>
    </citation>
    <scope>NUCLEOTIDE SEQUENCE [LARGE SCALE GENOMIC DNA]</scope>
    <source>
        <strain>CC9902</strain>
    </source>
</reference>
<gene>
    <name evidence="1" type="primary">pyrG</name>
    <name type="ordered locus">Syncc9902_2235</name>
</gene>
<proteinExistence type="inferred from homology"/>
<comment type="function">
    <text evidence="1">Catalyzes the ATP-dependent amination of UTP to CTP with either L-glutamine or ammonia as the source of nitrogen. Regulates intracellular CTP levels through interactions with the four ribonucleotide triphosphates.</text>
</comment>
<comment type="catalytic activity">
    <reaction evidence="1">
        <text>UTP + L-glutamine + ATP + H2O = CTP + L-glutamate + ADP + phosphate + 2 H(+)</text>
        <dbReference type="Rhea" id="RHEA:26426"/>
        <dbReference type="ChEBI" id="CHEBI:15377"/>
        <dbReference type="ChEBI" id="CHEBI:15378"/>
        <dbReference type="ChEBI" id="CHEBI:29985"/>
        <dbReference type="ChEBI" id="CHEBI:30616"/>
        <dbReference type="ChEBI" id="CHEBI:37563"/>
        <dbReference type="ChEBI" id="CHEBI:43474"/>
        <dbReference type="ChEBI" id="CHEBI:46398"/>
        <dbReference type="ChEBI" id="CHEBI:58359"/>
        <dbReference type="ChEBI" id="CHEBI:456216"/>
        <dbReference type="EC" id="6.3.4.2"/>
    </reaction>
</comment>
<comment type="catalytic activity">
    <reaction evidence="1">
        <text>L-glutamine + H2O = L-glutamate + NH4(+)</text>
        <dbReference type="Rhea" id="RHEA:15889"/>
        <dbReference type="ChEBI" id="CHEBI:15377"/>
        <dbReference type="ChEBI" id="CHEBI:28938"/>
        <dbReference type="ChEBI" id="CHEBI:29985"/>
        <dbReference type="ChEBI" id="CHEBI:58359"/>
    </reaction>
</comment>
<comment type="catalytic activity">
    <reaction evidence="1">
        <text>UTP + NH4(+) + ATP = CTP + ADP + phosphate + 2 H(+)</text>
        <dbReference type="Rhea" id="RHEA:16597"/>
        <dbReference type="ChEBI" id="CHEBI:15378"/>
        <dbReference type="ChEBI" id="CHEBI:28938"/>
        <dbReference type="ChEBI" id="CHEBI:30616"/>
        <dbReference type="ChEBI" id="CHEBI:37563"/>
        <dbReference type="ChEBI" id="CHEBI:43474"/>
        <dbReference type="ChEBI" id="CHEBI:46398"/>
        <dbReference type="ChEBI" id="CHEBI:456216"/>
    </reaction>
</comment>
<comment type="activity regulation">
    <text evidence="1">Allosterically activated by GTP, when glutamine is the substrate; GTP has no effect on the reaction when ammonia is the substrate. The allosteric effector GTP functions by stabilizing the protein conformation that binds the tetrahedral intermediate(s) formed during glutamine hydrolysis. Inhibited by the product CTP, via allosteric rather than competitive inhibition.</text>
</comment>
<comment type="pathway">
    <text evidence="1">Pyrimidine metabolism; CTP biosynthesis via de novo pathway; CTP from UDP: step 2/2.</text>
</comment>
<comment type="subunit">
    <text evidence="1">Homotetramer.</text>
</comment>
<comment type="miscellaneous">
    <text evidence="1">CTPSs have evolved a hybrid strategy for distinguishing between UTP and CTP. The overlapping regions of the product feedback inhibitory and substrate sites recognize a common feature in both compounds, the triphosphate moiety. To differentiate isosteric substrate and product pyrimidine rings, an additional pocket far from the expected kinase/ligase catalytic site, specifically recognizes the cytosine and ribose portions of the product inhibitor.</text>
</comment>
<comment type="similarity">
    <text evidence="1">Belongs to the CTP synthase family.</text>
</comment>
<feature type="chain" id="PRO_0000266243" description="CTP synthase">
    <location>
        <begin position="1"/>
        <end position="549"/>
    </location>
</feature>
<feature type="domain" description="Glutamine amidotransferase type-1" evidence="1">
    <location>
        <begin position="292"/>
        <end position="534"/>
    </location>
</feature>
<feature type="region of interest" description="Amidoligase domain" evidence="1">
    <location>
        <begin position="1"/>
        <end position="267"/>
    </location>
</feature>
<feature type="active site" description="Nucleophile; for glutamine hydrolysis" evidence="1">
    <location>
        <position position="381"/>
    </location>
</feature>
<feature type="active site" evidence="1">
    <location>
        <position position="507"/>
    </location>
</feature>
<feature type="active site" evidence="1">
    <location>
        <position position="509"/>
    </location>
</feature>
<feature type="binding site" evidence="1">
    <location>
        <position position="13"/>
    </location>
    <ligand>
        <name>CTP</name>
        <dbReference type="ChEBI" id="CHEBI:37563"/>
        <note>allosteric inhibitor</note>
    </ligand>
</feature>
<feature type="binding site" evidence="1">
    <location>
        <position position="13"/>
    </location>
    <ligand>
        <name>UTP</name>
        <dbReference type="ChEBI" id="CHEBI:46398"/>
    </ligand>
</feature>
<feature type="binding site" evidence="1">
    <location>
        <begin position="14"/>
        <end position="19"/>
    </location>
    <ligand>
        <name>ATP</name>
        <dbReference type="ChEBI" id="CHEBI:30616"/>
    </ligand>
</feature>
<feature type="binding site" evidence="1">
    <location>
        <position position="71"/>
    </location>
    <ligand>
        <name>ATP</name>
        <dbReference type="ChEBI" id="CHEBI:30616"/>
    </ligand>
</feature>
<feature type="binding site" evidence="1">
    <location>
        <position position="71"/>
    </location>
    <ligand>
        <name>Mg(2+)</name>
        <dbReference type="ChEBI" id="CHEBI:18420"/>
    </ligand>
</feature>
<feature type="binding site" evidence="1">
    <location>
        <position position="141"/>
    </location>
    <ligand>
        <name>Mg(2+)</name>
        <dbReference type="ChEBI" id="CHEBI:18420"/>
    </ligand>
</feature>
<feature type="binding site" evidence="1">
    <location>
        <begin position="148"/>
        <end position="150"/>
    </location>
    <ligand>
        <name>CTP</name>
        <dbReference type="ChEBI" id="CHEBI:37563"/>
        <note>allosteric inhibitor</note>
    </ligand>
</feature>
<feature type="binding site" evidence="1">
    <location>
        <begin position="188"/>
        <end position="193"/>
    </location>
    <ligand>
        <name>CTP</name>
        <dbReference type="ChEBI" id="CHEBI:37563"/>
        <note>allosteric inhibitor</note>
    </ligand>
</feature>
<feature type="binding site" evidence="1">
    <location>
        <begin position="188"/>
        <end position="193"/>
    </location>
    <ligand>
        <name>UTP</name>
        <dbReference type="ChEBI" id="CHEBI:46398"/>
    </ligand>
</feature>
<feature type="binding site" evidence="1">
    <location>
        <position position="224"/>
    </location>
    <ligand>
        <name>CTP</name>
        <dbReference type="ChEBI" id="CHEBI:37563"/>
        <note>allosteric inhibitor</note>
    </ligand>
</feature>
<feature type="binding site" evidence="1">
    <location>
        <position position="224"/>
    </location>
    <ligand>
        <name>UTP</name>
        <dbReference type="ChEBI" id="CHEBI:46398"/>
    </ligand>
</feature>
<feature type="binding site" evidence="1">
    <location>
        <position position="354"/>
    </location>
    <ligand>
        <name>L-glutamine</name>
        <dbReference type="ChEBI" id="CHEBI:58359"/>
    </ligand>
</feature>
<feature type="binding site" evidence="1">
    <location>
        <begin position="382"/>
        <end position="385"/>
    </location>
    <ligand>
        <name>L-glutamine</name>
        <dbReference type="ChEBI" id="CHEBI:58359"/>
    </ligand>
</feature>
<feature type="binding site" evidence="1">
    <location>
        <position position="405"/>
    </location>
    <ligand>
        <name>L-glutamine</name>
        <dbReference type="ChEBI" id="CHEBI:58359"/>
    </ligand>
</feature>
<feature type="binding site" evidence="1">
    <location>
        <position position="462"/>
    </location>
    <ligand>
        <name>L-glutamine</name>
        <dbReference type="ChEBI" id="CHEBI:58359"/>
    </ligand>
</feature>
<evidence type="ECO:0000255" key="1">
    <source>
        <dbReference type="HAMAP-Rule" id="MF_01227"/>
    </source>
</evidence>
<dbReference type="EC" id="6.3.4.2" evidence="1"/>
<dbReference type="EMBL" id="CP000097">
    <property type="protein sequence ID" value="ABB27193.1"/>
    <property type="molecule type" value="Genomic_DNA"/>
</dbReference>
<dbReference type="RefSeq" id="WP_011360970.1">
    <property type="nucleotide sequence ID" value="NC_007513.1"/>
</dbReference>
<dbReference type="SMR" id="Q3AUG4"/>
<dbReference type="STRING" id="316279.Syncc9902_2235"/>
<dbReference type="MEROPS" id="C26.964"/>
<dbReference type="KEGG" id="sye:Syncc9902_2235"/>
<dbReference type="eggNOG" id="COG0504">
    <property type="taxonomic scope" value="Bacteria"/>
</dbReference>
<dbReference type="HOGENOM" id="CLU_011675_5_0_3"/>
<dbReference type="OrthoDB" id="9801107at2"/>
<dbReference type="UniPathway" id="UPA00159">
    <property type="reaction ID" value="UER00277"/>
</dbReference>
<dbReference type="Proteomes" id="UP000002712">
    <property type="component" value="Chromosome"/>
</dbReference>
<dbReference type="GO" id="GO:0005829">
    <property type="term" value="C:cytosol"/>
    <property type="evidence" value="ECO:0007669"/>
    <property type="project" value="TreeGrafter"/>
</dbReference>
<dbReference type="GO" id="GO:0005524">
    <property type="term" value="F:ATP binding"/>
    <property type="evidence" value="ECO:0007669"/>
    <property type="project" value="UniProtKB-KW"/>
</dbReference>
<dbReference type="GO" id="GO:0003883">
    <property type="term" value="F:CTP synthase activity"/>
    <property type="evidence" value="ECO:0007669"/>
    <property type="project" value="UniProtKB-UniRule"/>
</dbReference>
<dbReference type="GO" id="GO:0004359">
    <property type="term" value="F:glutaminase activity"/>
    <property type="evidence" value="ECO:0007669"/>
    <property type="project" value="RHEA"/>
</dbReference>
<dbReference type="GO" id="GO:0042802">
    <property type="term" value="F:identical protein binding"/>
    <property type="evidence" value="ECO:0007669"/>
    <property type="project" value="TreeGrafter"/>
</dbReference>
<dbReference type="GO" id="GO:0046872">
    <property type="term" value="F:metal ion binding"/>
    <property type="evidence" value="ECO:0007669"/>
    <property type="project" value="UniProtKB-KW"/>
</dbReference>
<dbReference type="GO" id="GO:0044210">
    <property type="term" value="P:'de novo' CTP biosynthetic process"/>
    <property type="evidence" value="ECO:0007669"/>
    <property type="project" value="UniProtKB-UniRule"/>
</dbReference>
<dbReference type="GO" id="GO:0019856">
    <property type="term" value="P:pyrimidine nucleobase biosynthetic process"/>
    <property type="evidence" value="ECO:0007669"/>
    <property type="project" value="TreeGrafter"/>
</dbReference>
<dbReference type="CDD" id="cd03113">
    <property type="entry name" value="CTPS_N"/>
    <property type="match status" value="1"/>
</dbReference>
<dbReference type="CDD" id="cd01746">
    <property type="entry name" value="GATase1_CTP_Synthase"/>
    <property type="match status" value="1"/>
</dbReference>
<dbReference type="FunFam" id="3.40.50.300:FF:000009">
    <property type="entry name" value="CTP synthase"/>
    <property type="match status" value="1"/>
</dbReference>
<dbReference type="FunFam" id="3.40.50.880:FF:000002">
    <property type="entry name" value="CTP synthase"/>
    <property type="match status" value="1"/>
</dbReference>
<dbReference type="Gene3D" id="3.40.50.880">
    <property type="match status" value="1"/>
</dbReference>
<dbReference type="Gene3D" id="3.40.50.300">
    <property type="entry name" value="P-loop containing nucleotide triphosphate hydrolases"/>
    <property type="match status" value="1"/>
</dbReference>
<dbReference type="HAMAP" id="MF_01227">
    <property type="entry name" value="PyrG"/>
    <property type="match status" value="1"/>
</dbReference>
<dbReference type="InterPro" id="IPR029062">
    <property type="entry name" value="Class_I_gatase-like"/>
</dbReference>
<dbReference type="InterPro" id="IPR004468">
    <property type="entry name" value="CTP_synthase"/>
</dbReference>
<dbReference type="InterPro" id="IPR017456">
    <property type="entry name" value="CTP_synthase_N"/>
</dbReference>
<dbReference type="InterPro" id="IPR017926">
    <property type="entry name" value="GATASE"/>
</dbReference>
<dbReference type="InterPro" id="IPR033828">
    <property type="entry name" value="GATase1_CTP_Synthase"/>
</dbReference>
<dbReference type="InterPro" id="IPR027417">
    <property type="entry name" value="P-loop_NTPase"/>
</dbReference>
<dbReference type="NCBIfam" id="NF003792">
    <property type="entry name" value="PRK05380.1"/>
    <property type="match status" value="1"/>
</dbReference>
<dbReference type="NCBIfam" id="TIGR00337">
    <property type="entry name" value="PyrG"/>
    <property type="match status" value="1"/>
</dbReference>
<dbReference type="PANTHER" id="PTHR11550">
    <property type="entry name" value="CTP SYNTHASE"/>
    <property type="match status" value="1"/>
</dbReference>
<dbReference type="PANTHER" id="PTHR11550:SF0">
    <property type="entry name" value="CTP SYNTHASE-RELATED"/>
    <property type="match status" value="1"/>
</dbReference>
<dbReference type="Pfam" id="PF06418">
    <property type="entry name" value="CTP_synth_N"/>
    <property type="match status" value="1"/>
</dbReference>
<dbReference type="Pfam" id="PF00117">
    <property type="entry name" value="GATase"/>
    <property type="match status" value="1"/>
</dbReference>
<dbReference type="SUPFAM" id="SSF52317">
    <property type="entry name" value="Class I glutamine amidotransferase-like"/>
    <property type="match status" value="1"/>
</dbReference>
<dbReference type="SUPFAM" id="SSF52540">
    <property type="entry name" value="P-loop containing nucleoside triphosphate hydrolases"/>
    <property type="match status" value="1"/>
</dbReference>
<dbReference type="PROSITE" id="PS51273">
    <property type="entry name" value="GATASE_TYPE_1"/>
    <property type="match status" value="1"/>
</dbReference>
<name>PYRG_SYNS9</name>